<feature type="chain" id="PRO_0000204757" description="CEN-like protein 1">
    <location>
        <begin position="1"/>
        <end position="174"/>
    </location>
</feature>
<sequence>MASRVVEPLVVARVIGEVVDSFNPSVKLNVIYNGSKQVFNGHELMPAVIAAKPRVEIGGEDMRSAYTLIMTDPDVPGPSDPYLREHLHWIVTDIPGSTDSSFGREIVSYESPKPVIGIHRYVLLLYKQSGRQTVKPAATRDHFNTRRYTAENGLGSPVAAVYFNAQRETAARRR</sequence>
<evidence type="ECO:0000250" key="1"/>
<evidence type="ECO:0000305" key="2"/>
<gene>
    <name type="primary">CET1</name>
</gene>
<reference key="1">
    <citation type="journal article" date="1999" name="Plant Cell">
        <title>Expression of CENTRORADIALIS (CEN) and CEN-like genes in tobacco reveals a conserved mechanism controlling phase change in diverse species.</title>
        <authorList>
            <person name="Amaya I."/>
            <person name="Ratcliffe O.J."/>
            <person name="Bradley D.J."/>
        </authorList>
    </citation>
    <scope>NUCLEOTIDE SEQUENCE [MRNA]</scope>
    <source>
        <strain>cv. Samsun</strain>
    </source>
</reference>
<keyword id="KW-0963">Cytoplasm</keyword>
<keyword id="KW-1185">Reference proteome</keyword>
<comment type="function">
    <text evidence="1">May form complexes with phosphorylated ligands by interfering with kinases and their effectors.</text>
</comment>
<comment type="subcellular location">
    <subcellularLocation>
        <location evidence="1">Cytoplasm</location>
    </subcellularLocation>
</comment>
<comment type="tissue specificity">
    <text>Expressed in vegetative axillary meristems but not in the main shoot meristem.</text>
</comment>
<comment type="induction">
    <text>Down-regulated at the onset of flowering.</text>
</comment>
<comment type="similarity">
    <text evidence="2">Belongs to the phosphatidylethanolamine-binding protein family.</text>
</comment>
<proteinExistence type="evidence at transcript level"/>
<dbReference type="EMBL" id="AF145259">
    <property type="protein sequence ID" value="AAD43528.1"/>
    <property type="molecule type" value="mRNA"/>
</dbReference>
<dbReference type="RefSeq" id="XP_016462721.1">
    <property type="nucleotide sequence ID" value="XM_016607235.1"/>
</dbReference>
<dbReference type="SMR" id="Q9XH44"/>
<dbReference type="STRING" id="4097.Q9XH44"/>
<dbReference type="PaxDb" id="4097-Q9XH44"/>
<dbReference type="KEGG" id="nta:107785846"/>
<dbReference type="OMA" id="FHLANWL"/>
<dbReference type="OrthoDB" id="2506647at2759"/>
<dbReference type="PhylomeDB" id="Q9XH44"/>
<dbReference type="Proteomes" id="UP000084051">
    <property type="component" value="Unplaced"/>
</dbReference>
<dbReference type="GO" id="GO:0005737">
    <property type="term" value="C:cytoplasm"/>
    <property type="evidence" value="ECO:0007669"/>
    <property type="project" value="UniProtKB-SubCell"/>
</dbReference>
<dbReference type="GO" id="GO:0009908">
    <property type="term" value="P:flower development"/>
    <property type="evidence" value="ECO:0000318"/>
    <property type="project" value="GO_Central"/>
</dbReference>
<dbReference type="GO" id="GO:0010228">
    <property type="term" value="P:vegetative to reproductive phase transition of meristem"/>
    <property type="evidence" value="ECO:0000318"/>
    <property type="project" value="GO_Central"/>
</dbReference>
<dbReference type="CDD" id="cd00866">
    <property type="entry name" value="PEBP_euk"/>
    <property type="match status" value="1"/>
</dbReference>
<dbReference type="FunFam" id="3.90.280.10:FF:000001">
    <property type="entry name" value="Terminal flower 1"/>
    <property type="match status" value="1"/>
</dbReference>
<dbReference type="Gene3D" id="3.90.280.10">
    <property type="entry name" value="PEBP-like"/>
    <property type="match status" value="1"/>
</dbReference>
<dbReference type="InterPro" id="IPR008914">
    <property type="entry name" value="PEBP"/>
</dbReference>
<dbReference type="InterPro" id="IPR036610">
    <property type="entry name" value="PEBP-like_sf"/>
</dbReference>
<dbReference type="InterPro" id="IPR035810">
    <property type="entry name" value="PEBP_euk"/>
</dbReference>
<dbReference type="InterPro" id="IPR001858">
    <property type="entry name" value="Phosphatidylethanolamine-bd_CS"/>
</dbReference>
<dbReference type="PANTHER" id="PTHR11362">
    <property type="entry name" value="PHOSPHATIDYLETHANOLAMINE-BINDING PROTEIN"/>
    <property type="match status" value="1"/>
</dbReference>
<dbReference type="PANTHER" id="PTHR11362:SF108">
    <property type="entry name" value="PROTEIN BROTHER OF FT AND TFL 1"/>
    <property type="match status" value="1"/>
</dbReference>
<dbReference type="Pfam" id="PF01161">
    <property type="entry name" value="PBP"/>
    <property type="match status" value="1"/>
</dbReference>
<dbReference type="SUPFAM" id="SSF49777">
    <property type="entry name" value="PEBP-like"/>
    <property type="match status" value="1"/>
</dbReference>
<dbReference type="PROSITE" id="PS01220">
    <property type="entry name" value="PBP"/>
    <property type="match status" value="1"/>
</dbReference>
<name>CET1_TOBAC</name>
<organism>
    <name type="scientific">Nicotiana tabacum</name>
    <name type="common">Common tobacco</name>
    <dbReference type="NCBI Taxonomy" id="4097"/>
    <lineage>
        <taxon>Eukaryota</taxon>
        <taxon>Viridiplantae</taxon>
        <taxon>Streptophyta</taxon>
        <taxon>Embryophyta</taxon>
        <taxon>Tracheophyta</taxon>
        <taxon>Spermatophyta</taxon>
        <taxon>Magnoliopsida</taxon>
        <taxon>eudicotyledons</taxon>
        <taxon>Gunneridae</taxon>
        <taxon>Pentapetalae</taxon>
        <taxon>asterids</taxon>
        <taxon>lamiids</taxon>
        <taxon>Solanales</taxon>
        <taxon>Solanaceae</taxon>
        <taxon>Nicotianoideae</taxon>
        <taxon>Nicotianeae</taxon>
        <taxon>Nicotiana</taxon>
    </lineage>
</organism>
<accession>Q9XH44</accession>
<protein>
    <recommendedName>
        <fullName>CEN-like protein 1</fullName>
    </recommendedName>
</protein>